<accession>A7NBY0</accession>
<feature type="chain" id="PRO_1000075342" description="Peptidyl-tRNA hydrolase">
    <location>
        <begin position="1"/>
        <end position="191"/>
    </location>
</feature>
<feature type="active site" description="Proton acceptor" evidence="1">
    <location>
        <position position="22"/>
    </location>
</feature>
<feature type="binding site" evidence="1">
    <location>
        <position position="17"/>
    </location>
    <ligand>
        <name>tRNA</name>
        <dbReference type="ChEBI" id="CHEBI:17843"/>
    </ligand>
</feature>
<feature type="binding site" evidence="1">
    <location>
        <position position="68"/>
    </location>
    <ligand>
        <name>tRNA</name>
        <dbReference type="ChEBI" id="CHEBI:17843"/>
    </ligand>
</feature>
<feature type="binding site" evidence="1">
    <location>
        <position position="70"/>
    </location>
    <ligand>
        <name>tRNA</name>
        <dbReference type="ChEBI" id="CHEBI:17843"/>
    </ligand>
</feature>
<feature type="binding site" evidence="1">
    <location>
        <position position="116"/>
    </location>
    <ligand>
        <name>tRNA</name>
        <dbReference type="ChEBI" id="CHEBI:17843"/>
    </ligand>
</feature>
<feature type="site" description="Discriminates between blocked and unblocked aminoacyl-tRNA" evidence="1">
    <location>
        <position position="12"/>
    </location>
</feature>
<feature type="site" description="Stabilizes the basic form of H active site to accept a proton" evidence="1">
    <location>
        <position position="95"/>
    </location>
</feature>
<gene>
    <name evidence="1" type="primary">pth</name>
    <name type="ordered locus">FTA_1007</name>
</gene>
<proteinExistence type="inferred from homology"/>
<sequence length="191" mass="21099">MPKIKMIVGLGNIGKEYQDTRHNVGEWFIAKIAQDNNQSFSSNTKLNCNLAKVSIDYNNVVLVFPTTYMNNSGLAVSKVANFYKIAPAEILVAHDELDIDSGEIRLKKGGGHGGHNGLRSINQHLGTNDYLRLRIGIGHPGHKSKVANYVLSNPSIAQKKDIDSAIDNGICFLDDIINYKLEPVMQKLHTK</sequence>
<organism>
    <name type="scientific">Francisella tularensis subsp. holarctica (strain FTNF002-00 / FTA)</name>
    <dbReference type="NCBI Taxonomy" id="458234"/>
    <lineage>
        <taxon>Bacteria</taxon>
        <taxon>Pseudomonadati</taxon>
        <taxon>Pseudomonadota</taxon>
        <taxon>Gammaproteobacteria</taxon>
        <taxon>Thiotrichales</taxon>
        <taxon>Francisellaceae</taxon>
        <taxon>Francisella</taxon>
    </lineage>
</organism>
<evidence type="ECO:0000255" key="1">
    <source>
        <dbReference type="HAMAP-Rule" id="MF_00083"/>
    </source>
</evidence>
<dbReference type="EC" id="3.1.1.29" evidence="1"/>
<dbReference type="EMBL" id="CP000803">
    <property type="protein sequence ID" value="ABU61483.2"/>
    <property type="molecule type" value="Genomic_DNA"/>
</dbReference>
<dbReference type="RefSeq" id="WP_003015752.1">
    <property type="nucleotide sequence ID" value="NC_009749.1"/>
</dbReference>
<dbReference type="SMR" id="A7NBY0"/>
<dbReference type="KEGG" id="fta:FTA_1007"/>
<dbReference type="HOGENOM" id="CLU_062456_3_1_6"/>
<dbReference type="GO" id="GO:0005737">
    <property type="term" value="C:cytoplasm"/>
    <property type="evidence" value="ECO:0007669"/>
    <property type="project" value="UniProtKB-SubCell"/>
</dbReference>
<dbReference type="GO" id="GO:0004045">
    <property type="term" value="F:peptidyl-tRNA hydrolase activity"/>
    <property type="evidence" value="ECO:0007669"/>
    <property type="project" value="UniProtKB-UniRule"/>
</dbReference>
<dbReference type="GO" id="GO:0000049">
    <property type="term" value="F:tRNA binding"/>
    <property type="evidence" value="ECO:0007669"/>
    <property type="project" value="UniProtKB-UniRule"/>
</dbReference>
<dbReference type="GO" id="GO:0006515">
    <property type="term" value="P:protein quality control for misfolded or incompletely synthesized proteins"/>
    <property type="evidence" value="ECO:0007669"/>
    <property type="project" value="UniProtKB-UniRule"/>
</dbReference>
<dbReference type="GO" id="GO:0072344">
    <property type="term" value="P:rescue of stalled ribosome"/>
    <property type="evidence" value="ECO:0007669"/>
    <property type="project" value="UniProtKB-UniRule"/>
</dbReference>
<dbReference type="CDD" id="cd00462">
    <property type="entry name" value="PTH"/>
    <property type="match status" value="1"/>
</dbReference>
<dbReference type="FunFam" id="3.40.50.1470:FF:000001">
    <property type="entry name" value="Peptidyl-tRNA hydrolase"/>
    <property type="match status" value="1"/>
</dbReference>
<dbReference type="Gene3D" id="3.40.50.1470">
    <property type="entry name" value="Peptidyl-tRNA hydrolase"/>
    <property type="match status" value="1"/>
</dbReference>
<dbReference type="HAMAP" id="MF_00083">
    <property type="entry name" value="Pept_tRNA_hydro_bact"/>
    <property type="match status" value="1"/>
</dbReference>
<dbReference type="InterPro" id="IPR001328">
    <property type="entry name" value="Pept_tRNA_hydro"/>
</dbReference>
<dbReference type="InterPro" id="IPR018171">
    <property type="entry name" value="Pept_tRNA_hydro_CS"/>
</dbReference>
<dbReference type="InterPro" id="IPR036416">
    <property type="entry name" value="Pept_tRNA_hydro_sf"/>
</dbReference>
<dbReference type="NCBIfam" id="TIGR00447">
    <property type="entry name" value="pth"/>
    <property type="match status" value="1"/>
</dbReference>
<dbReference type="PANTHER" id="PTHR17224">
    <property type="entry name" value="PEPTIDYL-TRNA HYDROLASE"/>
    <property type="match status" value="1"/>
</dbReference>
<dbReference type="PANTHER" id="PTHR17224:SF1">
    <property type="entry name" value="PEPTIDYL-TRNA HYDROLASE"/>
    <property type="match status" value="1"/>
</dbReference>
<dbReference type="Pfam" id="PF01195">
    <property type="entry name" value="Pept_tRNA_hydro"/>
    <property type="match status" value="1"/>
</dbReference>
<dbReference type="SUPFAM" id="SSF53178">
    <property type="entry name" value="Peptidyl-tRNA hydrolase-like"/>
    <property type="match status" value="1"/>
</dbReference>
<dbReference type="PROSITE" id="PS01196">
    <property type="entry name" value="PEPT_TRNA_HYDROL_2"/>
    <property type="match status" value="1"/>
</dbReference>
<name>PTH_FRATF</name>
<protein>
    <recommendedName>
        <fullName evidence="1">Peptidyl-tRNA hydrolase</fullName>
        <shortName evidence="1">Pth</shortName>
        <ecNumber evidence="1">3.1.1.29</ecNumber>
    </recommendedName>
</protein>
<comment type="function">
    <text evidence="1">Hydrolyzes ribosome-free peptidyl-tRNAs (with 1 or more amino acids incorporated), which drop off the ribosome during protein synthesis, or as a result of ribosome stalling.</text>
</comment>
<comment type="function">
    <text evidence="1">Catalyzes the release of premature peptidyl moieties from peptidyl-tRNA molecules trapped in stalled 50S ribosomal subunits, and thus maintains levels of free tRNAs and 50S ribosomes.</text>
</comment>
<comment type="catalytic activity">
    <reaction evidence="1">
        <text>an N-acyl-L-alpha-aminoacyl-tRNA + H2O = an N-acyl-L-amino acid + a tRNA + H(+)</text>
        <dbReference type="Rhea" id="RHEA:54448"/>
        <dbReference type="Rhea" id="RHEA-COMP:10123"/>
        <dbReference type="Rhea" id="RHEA-COMP:13883"/>
        <dbReference type="ChEBI" id="CHEBI:15377"/>
        <dbReference type="ChEBI" id="CHEBI:15378"/>
        <dbReference type="ChEBI" id="CHEBI:59874"/>
        <dbReference type="ChEBI" id="CHEBI:78442"/>
        <dbReference type="ChEBI" id="CHEBI:138191"/>
        <dbReference type="EC" id="3.1.1.29"/>
    </reaction>
</comment>
<comment type="subunit">
    <text evidence="1">Monomer.</text>
</comment>
<comment type="subcellular location">
    <subcellularLocation>
        <location evidence="1">Cytoplasm</location>
    </subcellularLocation>
</comment>
<comment type="similarity">
    <text evidence="1">Belongs to the PTH family.</text>
</comment>
<reference key="1">
    <citation type="journal article" date="2009" name="PLoS ONE">
        <title>Complete genome sequence of Francisella tularensis subspecies holarctica FTNF002-00.</title>
        <authorList>
            <person name="Barabote R.D."/>
            <person name="Xie G."/>
            <person name="Brettin T.S."/>
            <person name="Hinrichs S.H."/>
            <person name="Fey P.D."/>
            <person name="Jay J.J."/>
            <person name="Engle J.L."/>
            <person name="Godbole S.D."/>
            <person name="Noronha J.M."/>
            <person name="Scheuermann R.H."/>
            <person name="Zhou L.W."/>
            <person name="Lion C."/>
            <person name="Dempsey M.P."/>
        </authorList>
    </citation>
    <scope>NUCLEOTIDE SEQUENCE [LARGE SCALE GENOMIC DNA]</scope>
    <source>
        <strain>FTNF002-00 / FTA</strain>
    </source>
</reference>
<keyword id="KW-0963">Cytoplasm</keyword>
<keyword id="KW-0378">Hydrolase</keyword>
<keyword id="KW-0694">RNA-binding</keyword>
<keyword id="KW-0820">tRNA-binding</keyword>